<name>MTNA_ENT38</name>
<keyword id="KW-0028">Amino-acid biosynthesis</keyword>
<keyword id="KW-0413">Isomerase</keyword>
<keyword id="KW-0486">Methionine biosynthesis</keyword>
<evidence type="ECO:0000255" key="1">
    <source>
        <dbReference type="HAMAP-Rule" id="MF_01678"/>
    </source>
</evidence>
<evidence type="ECO:0000305" key="2"/>
<dbReference type="EC" id="5.3.1.23" evidence="1"/>
<dbReference type="EMBL" id="CP000653">
    <property type="protein sequence ID" value="ABP59821.1"/>
    <property type="molecule type" value="Genomic_DNA"/>
</dbReference>
<dbReference type="RefSeq" id="WP_012016541.1">
    <property type="nucleotide sequence ID" value="NC_009436.1"/>
</dbReference>
<dbReference type="SMR" id="A4W7Z1"/>
<dbReference type="STRING" id="399742.Ent638_1140"/>
<dbReference type="KEGG" id="ent:Ent638_1140"/>
<dbReference type="eggNOG" id="COG0182">
    <property type="taxonomic scope" value="Bacteria"/>
</dbReference>
<dbReference type="HOGENOM" id="CLU_016218_1_2_6"/>
<dbReference type="OrthoDB" id="9803436at2"/>
<dbReference type="UniPathway" id="UPA00904">
    <property type="reaction ID" value="UER00874"/>
</dbReference>
<dbReference type="Proteomes" id="UP000000230">
    <property type="component" value="Chromosome"/>
</dbReference>
<dbReference type="GO" id="GO:0046523">
    <property type="term" value="F:S-methyl-5-thioribose-1-phosphate isomerase activity"/>
    <property type="evidence" value="ECO:0007669"/>
    <property type="project" value="UniProtKB-UniRule"/>
</dbReference>
<dbReference type="GO" id="GO:0019509">
    <property type="term" value="P:L-methionine salvage from methylthioadenosine"/>
    <property type="evidence" value="ECO:0007669"/>
    <property type="project" value="UniProtKB-UniRule"/>
</dbReference>
<dbReference type="FunFam" id="3.40.50.10470:FF:000006">
    <property type="entry name" value="Methylthioribose-1-phosphate isomerase"/>
    <property type="match status" value="1"/>
</dbReference>
<dbReference type="Gene3D" id="1.20.120.420">
    <property type="entry name" value="translation initiation factor eif-2b, domain 1"/>
    <property type="match status" value="1"/>
</dbReference>
<dbReference type="Gene3D" id="3.40.50.10470">
    <property type="entry name" value="Translation initiation factor eif-2b, domain 2"/>
    <property type="match status" value="1"/>
</dbReference>
<dbReference type="HAMAP" id="MF_01678">
    <property type="entry name" value="Salvage_MtnA"/>
    <property type="match status" value="1"/>
</dbReference>
<dbReference type="InterPro" id="IPR000649">
    <property type="entry name" value="IF-2B-related"/>
</dbReference>
<dbReference type="InterPro" id="IPR005251">
    <property type="entry name" value="IF-M1Pi"/>
</dbReference>
<dbReference type="InterPro" id="IPR042529">
    <property type="entry name" value="IF_2B-like_C"/>
</dbReference>
<dbReference type="InterPro" id="IPR011559">
    <property type="entry name" value="Initiation_fac_2B_a/b/d"/>
</dbReference>
<dbReference type="InterPro" id="IPR027363">
    <property type="entry name" value="M1Pi_N"/>
</dbReference>
<dbReference type="InterPro" id="IPR037171">
    <property type="entry name" value="NagB/RpiA_transferase-like"/>
</dbReference>
<dbReference type="NCBIfam" id="TIGR00524">
    <property type="entry name" value="eIF-2B_rel"/>
    <property type="match status" value="1"/>
</dbReference>
<dbReference type="NCBIfam" id="NF004326">
    <property type="entry name" value="PRK05720.1"/>
    <property type="match status" value="1"/>
</dbReference>
<dbReference type="NCBIfam" id="TIGR00512">
    <property type="entry name" value="salvage_mtnA"/>
    <property type="match status" value="1"/>
</dbReference>
<dbReference type="PANTHER" id="PTHR43475">
    <property type="entry name" value="METHYLTHIORIBOSE-1-PHOSPHATE ISOMERASE"/>
    <property type="match status" value="1"/>
</dbReference>
<dbReference type="PANTHER" id="PTHR43475:SF1">
    <property type="entry name" value="METHYLTHIORIBOSE-1-PHOSPHATE ISOMERASE"/>
    <property type="match status" value="1"/>
</dbReference>
<dbReference type="Pfam" id="PF01008">
    <property type="entry name" value="IF-2B"/>
    <property type="match status" value="1"/>
</dbReference>
<dbReference type="SUPFAM" id="SSF100950">
    <property type="entry name" value="NagB/RpiA/CoA transferase-like"/>
    <property type="match status" value="1"/>
</dbReference>
<organism>
    <name type="scientific">Enterobacter sp. (strain 638)</name>
    <dbReference type="NCBI Taxonomy" id="399742"/>
    <lineage>
        <taxon>Bacteria</taxon>
        <taxon>Pseudomonadati</taxon>
        <taxon>Pseudomonadota</taxon>
        <taxon>Gammaproteobacteria</taxon>
        <taxon>Enterobacterales</taxon>
        <taxon>Enterobacteriaceae</taxon>
        <taxon>Enterobacter</taxon>
    </lineage>
</organism>
<protein>
    <recommendedName>
        <fullName evidence="1">Methylthioribose-1-phosphate isomerase</fullName>
        <shortName evidence="1">M1Pi</shortName>
        <shortName evidence="1">MTR-1-P isomerase</shortName>
        <ecNumber evidence="1">5.3.1.23</ecNumber>
    </recommendedName>
    <alternativeName>
        <fullName evidence="1">S-methyl-5-thioribose-1-phosphate isomerase</fullName>
    </alternativeName>
</protein>
<gene>
    <name evidence="1" type="primary">mtnA</name>
    <name type="ordered locus">Ent638_1140</name>
</gene>
<sequence>MQTLQTTSLRVADNQLFILDQQALPQEKRWLDASTVEALVGHIHALRVRGAPLIGLSASLLLALLAENGHSRDQLAVALDTLRASRPTAVNLMNNLDRMKQALWQEDFVPALVTEALRLIEEDKQLCDAIARAGSQLVKPGSRLLTHCNTGGLATAGVGTALGVIAHAFAAGNVNNVWVDETRPLLQGGRLTAWELGELGVPYQLITDSMAASLMAKGQVDAVWVGADRIAANGDVANKIGTYSLAVLAKFHGIPFYVAAPQTTLDPHCPNGEAIPIEQRDAREVTGVAGSFGAVQWAPENAQVYNPAFDVTPAALISGWVLDTGVVLPEAVEQGVFKSSAV</sequence>
<proteinExistence type="inferred from homology"/>
<reference key="1">
    <citation type="journal article" date="2010" name="PLoS Genet.">
        <title>Genome sequence of the plant growth promoting endophytic bacterium Enterobacter sp. 638.</title>
        <authorList>
            <person name="Taghavi S."/>
            <person name="van der Lelie D."/>
            <person name="Hoffman A."/>
            <person name="Zhang Y.B."/>
            <person name="Walla M.D."/>
            <person name="Vangronsveld J."/>
            <person name="Newman L."/>
            <person name="Monchy S."/>
        </authorList>
    </citation>
    <scope>NUCLEOTIDE SEQUENCE [LARGE SCALE GENOMIC DNA]</scope>
    <source>
        <strain>638</strain>
    </source>
</reference>
<accession>A4W7Z1</accession>
<feature type="chain" id="PRO_0000357182" description="Methylthioribose-1-phosphate isomerase">
    <location>
        <begin position="1"/>
        <end position="342"/>
    </location>
</feature>
<feature type="active site" description="Proton donor" evidence="1">
    <location>
        <position position="228"/>
    </location>
</feature>
<feature type="binding site" evidence="1">
    <location>
        <begin position="49"/>
        <end position="51"/>
    </location>
    <ligand>
        <name>substrate</name>
    </ligand>
</feature>
<feature type="binding site" evidence="1">
    <location>
        <position position="86"/>
    </location>
    <ligand>
        <name>substrate</name>
    </ligand>
</feature>
<feature type="binding site" evidence="1">
    <location>
        <position position="187"/>
    </location>
    <ligand>
        <name>substrate</name>
    </ligand>
</feature>
<feature type="binding site" evidence="1">
    <location>
        <begin position="238"/>
        <end position="239"/>
    </location>
    <ligand>
        <name>substrate</name>
    </ligand>
</feature>
<feature type="site" description="Transition state stabilizer" evidence="1">
    <location>
        <position position="148"/>
    </location>
</feature>
<comment type="function">
    <text evidence="1">Catalyzes the interconversion of methylthioribose-1-phosphate (MTR-1-P) into methylthioribulose-1-phosphate (MTRu-1-P).</text>
</comment>
<comment type="catalytic activity">
    <reaction evidence="1">
        <text>5-(methylsulfanyl)-alpha-D-ribose 1-phosphate = 5-(methylsulfanyl)-D-ribulose 1-phosphate</text>
        <dbReference type="Rhea" id="RHEA:19989"/>
        <dbReference type="ChEBI" id="CHEBI:58533"/>
        <dbReference type="ChEBI" id="CHEBI:58548"/>
        <dbReference type="EC" id="5.3.1.23"/>
    </reaction>
</comment>
<comment type="pathway">
    <text evidence="1">Amino-acid biosynthesis; L-methionine biosynthesis via salvage pathway; L-methionine from S-methyl-5-thio-alpha-D-ribose 1-phosphate: step 1/6.</text>
</comment>
<comment type="similarity">
    <text evidence="2">Belongs to the eIF-2B alpha/beta/delta subunits family. MtnA subfamily.</text>
</comment>